<sequence length="443" mass="48893">MSTSDSIVSSQTKQSSWRKSDTTWTLGLFGTAIGAGVLFFPIRAGFGGLIPILLMLVLAYPIAFYCHRALARLCLSGSNPSGNITETVEEHFGKTGGVVITFLYFFAICPLLWIYGVTITNTFMTFWENQLGFAPLNRGFVALFLLLLMAFVIWFGKDLMVKVMSYLVWPFIASLVLISLSLIPYWNSAVIDQVDLGSLSLTGHDGILITVWLGISIMVFSFNFSPIVSSFVVSKREEYEKDFGRDFTERKCSQIISRASMLMVAVVMFFAFSCLFTLSPANMAEAKAQNIPVLSYLANHFASMTGTKTTFAITLEYAASIIALVAIFKSFFGHYLGTLEGLNGLILKFGYKGDKTKVSLGKLNTISMIFIMGSTWVVAYANPNILDLIEAMGAPIIASLLCLLPMYAIRKAPSLAKYRGRLDNVFVTVIGLLTILNIVYKLF</sequence>
<reference key="1">
    <citation type="journal article" date="2009" name="PLoS Genet.">
        <title>Organised genome dynamics in the Escherichia coli species results in highly diverse adaptive paths.</title>
        <authorList>
            <person name="Touchon M."/>
            <person name="Hoede C."/>
            <person name="Tenaillon O."/>
            <person name="Barbe V."/>
            <person name="Baeriswyl S."/>
            <person name="Bidet P."/>
            <person name="Bingen E."/>
            <person name="Bonacorsi S."/>
            <person name="Bouchier C."/>
            <person name="Bouvet O."/>
            <person name="Calteau A."/>
            <person name="Chiapello H."/>
            <person name="Clermont O."/>
            <person name="Cruveiller S."/>
            <person name="Danchin A."/>
            <person name="Diard M."/>
            <person name="Dossat C."/>
            <person name="Karoui M.E."/>
            <person name="Frapy E."/>
            <person name="Garry L."/>
            <person name="Ghigo J.M."/>
            <person name="Gilles A.M."/>
            <person name="Johnson J."/>
            <person name="Le Bouguenec C."/>
            <person name="Lescat M."/>
            <person name="Mangenot S."/>
            <person name="Martinez-Jehanne V."/>
            <person name="Matic I."/>
            <person name="Nassif X."/>
            <person name="Oztas S."/>
            <person name="Petit M.A."/>
            <person name="Pichon C."/>
            <person name="Rouy Z."/>
            <person name="Ruf C.S."/>
            <person name="Schneider D."/>
            <person name="Tourret J."/>
            <person name="Vacherie B."/>
            <person name="Vallenet D."/>
            <person name="Medigue C."/>
            <person name="Rocha E.P.C."/>
            <person name="Denamur E."/>
        </authorList>
    </citation>
    <scope>NUCLEOTIDE SEQUENCE [LARGE SCALE GENOMIC DNA]</scope>
    <source>
        <strain>IAI1</strain>
    </source>
</reference>
<name>TDCC_ECO8A</name>
<comment type="function">
    <text evidence="1">Involved in the import of threonine and serine into the cell, with the concomitant import of a proton (symport system).</text>
</comment>
<comment type="catalytic activity">
    <reaction evidence="1">
        <text>L-threonine(in) + H(+)(in) = L-threonine(out) + H(+)(out)</text>
        <dbReference type="Rhea" id="RHEA:28883"/>
        <dbReference type="ChEBI" id="CHEBI:15378"/>
        <dbReference type="ChEBI" id="CHEBI:57926"/>
    </reaction>
    <physiologicalReaction direction="right-to-left" evidence="1">
        <dbReference type="Rhea" id="RHEA:28885"/>
    </physiologicalReaction>
</comment>
<comment type="catalytic activity">
    <reaction evidence="1">
        <text>L-serine(in) + H(+)(in) = L-serine(out) + H(+)(out)</text>
        <dbReference type="Rhea" id="RHEA:28887"/>
        <dbReference type="ChEBI" id="CHEBI:15378"/>
        <dbReference type="ChEBI" id="CHEBI:33384"/>
    </reaction>
    <physiologicalReaction direction="right-to-left" evidence="1">
        <dbReference type="Rhea" id="RHEA:28889"/>
    </physiologicalReaction>
</comment>
<comment type="subcellular location">
    <subcellularLocation>
        <location evidence="1">Cell inner membrane</location>
        <topology evidence="1">Multi-pass membrane protein</topology>
    </subcellularLocation>
</comment>
<comment type="similarity">
    <text evidence="1">Belongs to the amino acid/polyamine transporter 2 family. SdaC/TdcC subfamily.</text>
</comment>
<protein>
    <recommendedName>
        <fullName evidence="1">Threonine/serine transporter TdcC</fullName>
    </recommendedName>
    <alternativeName>
        <fullName evidence="1">H(+)/threonine-serine symporter</fullName>
    </alternativeName>
</protein>
<feature type="chain" id="PRO_1000147628" description="Threonine/serine transporter TdcC">
    <location>
        <begin position="1"/>
        <end position="443"/>
    </location>
</feature>
<feature type="transmembrane region" description="Helical" evidence="1">
    <location>
        <begin position="22"/>
        <end position="42"/>
    </location>
</feature>
<feature type="transmembrane region" description="Helical" evidence="1">
    <location>
        <begin position="44"/>
        <end position="64"/>
    </location>
</feature>
<feature type="transmembrane region" description="Helical" evidence="1">
    <location>
        <begin position="97"/>
        <end position="117"/>
    </location>
</feature>
<feature type="transmembrane region" description="Helical" evidence="1">
    <location>
        <begin position="140"/>
        <end position="160"/>
    </location>
</feature>
<feature type="transmembrane region" description="Helical" evidence="1">
    <location>
        <begin position="163"/>
        <end position="183"/>
    </location>
</feature>
<feature type="transmembrane region" description="Helical" evidence="1">
    <location>
        <begin position="207"/>
        <end position="227"/>
    </location>
</feature>
<feature type="transmembrane region" description="Helical" evidence="1">
    <location>
        <begin position="261"/>
        <end position="281"/>
    </location>
</feature>
<feature type="transmembrane region" description="Helical" evidence="1">
    <location>
        <begin position="311"/>
        <end position="331"/>
    </location>
</feature>
<feature type="transmembrane region" description="Helical" evidence="1">
    <location>
        <begin position="366"/>
        <end position="386"/>
    </location>
</feature>
<feature type="transmembrane region" description="Helical" evidence="1">
    <location>
        <begin position="389"/>
        <end position="409"/>
    </location>
</feature>
<feature type="transmembrane region" description="Helical" evidence="1">
    <location>
        <begin position="423"/>
        <end position="443"/>
    </location>
</feature>
<keyword id="KW-0029">Amino-acid transport</keyword>
<keyword id="KW-0997">Cell inner membrane</keyword>
<keyword id="KW-1003">Cell membrane</keyword>
<keyword id="KW-0472">Membrane</keyword>
<keyword id="KW-0769">Symport</keyword>
<keyword id="KW-0812">Transmembrane</keyword>
<keyword id="KW-1133">Transmembrane helix</keyword>
<keyword id="KW-0813">Transport</keyword>
<dbReference type="EMBL" id="CU928160">
    <property type="protein sequence ID" value="CAR00079.1"/>
    <property type="molecule type" value="Genomic_DNA"/>
</dbReference>
<dbReference type="RefSeq" id="WP_000107720.1">
    <property type="nucleotide sequence ID" value="NC_011741.1"/>
</dbReference>
<dbReference type="SMR" id="B7M023"/>
<dbReference type="GeneID" id="75205075"/>
<dbReference type="KEGG" id="ecr:ECIAI1_3265"/>
<dbReference type="HOGENOM" id="CLU_052043_1_1_6"/>
<dbReference type="GO" id="GO:0005886">
    <property type="term" value="C:plasma membrane"/>
    <property type="evidence" value="ECO:0007669"/>
    <property type="project" value="UniProtKB-SubCell"/>
</dbReference>
<dbReference type="GO" id="GO:0015194">
    <property type="term" value="F:L-serine transmembrane transporter activity"/>
    <property type="evidence" value="ECO:0007669"/>
    <property type="project" value="InterPro"/>
</dbReference>
<dbReference type="GO" id="GO:0015293">
    <property type="term" value="F:symporter activity"/>
    <property type="evidence" value="ECO:0007669"/>
    <property type="project" value="UniProtKB-UniRule"/>
</dbReference>
<dbReference type="GO" id="GO:0015565">
    <property type="term" value="F:threonine efflux transmembrane transporter activity"/>
    <property type="evidence" value="ECO:0007669"/>
    <property type="project" value="InterPro"/>
</dbReference>
<dbReference type="HAMAP" id="MF_01583">
    <property type="entry name" value="Thr_Ser_transp_TdcC"/>
    <property type="match status" value="1"/>
</dbReference>
<dbReference type="InterPro" id="IPR018227">
    <property type="entry name" value="Amino_acid_transport_2"/>
</dbReference>
<dbReference type="InterPro" id="IPR004694">
    <property type="entry name" value="Hydroxy_aa_transpt"/>
</dbReference>
<dbReference type="InterPro" id="IPR023726">
    <property type="entry name" value="Thr/Ser_transpt_TdcC"/>
</dbReference>
<dbReference type="NCBIfam" id="NF010152">
    <property type="entry name" value="PRK13629.1"/>
    <property type="match status" value="1"/>
</dbReference>
<dbReference type="NCBIfam" id="TIGR00814">
    <property type="entry name" value="stp"/>
    <property type="match status" value="1"/>
</dbReference>
<dbReference type="PANTHER" id="PTHR35334">
    <property type="entry name" value="SERINE TRANSPORTER"/>
    <property type="match status" value="1"/>
</dbReference>
<dbReference type="PANTHER" id="PTHR35334:SF1">
    <property type="entry name" value="THREONINE_SERINE TRANSPORTER TDCC"/>
    <property type="match status" value="1"/>
</dbReference>
<dbReference type="Pfam" id="PF03222">
    <property type="entry name" value="Trp_Tyr_perm"/>
    <property type="match status" value="1"/>
</dbReference>
<organism>
    <name type="scientific">Escherichia coli O8 (strain IAI1)</name>
    <dbReference type="NCBI Taxonomy" id="585034"/>
    <lineage>
        <taxon>Bacteria</taxon>
        <taxon>Pseudomonadati</taxon>
        <taxon>Pseudomonadota</taxon>
        <taxon>Gammaproteobacteria</taxon>
        <taxon>Enterobacterales</taxon>
        <taxon>Enterobacteriaceae</taxon>
        <taxon>Escherichia</taxon>
    </lineage>
</organism>
<evidence type="ECO:0000255" key="1">
    <source>
        <dbReference type="HAMAP-Rule" id="MF_01583"/>
    </source>
</evidence>
<gene>
    <name evidence="1" type="primary">tdcC</name>
    <name type="ordered locus">ECIAI1_3265</name>
</gene>
<proteinExistence type="inferred from homology"/>
<accession>B7M023</accession>